<sequence>MKYISILGASGSIGTQTLDIIRSHPDEFQLTAISIGKNVDMARAIIEEFAPRLVAVAEADAYEKLRSEYAGKVKIVFGEEGLIEAAAFPETDIVVTAVVGSVGLVPTLRAIEAGKTIALANKETLVTAGHIVTAAAKKHGVSLLPVDSEHSAIFQCLQGEKRNRVEKIILTASGGSFRDKTREELKNVTVEEALRHPNWSMGAKITIDSATMMNKGLEVIEAHWLFELPYEQIDVLLHRESIIHSLVQFRDTSVIAQLGTPDMHVPIQYALTYPERLPLANAKPLDLAEISTLHFERVDFERFRCLQLAYEAGKAGGSLPTVLNAANEEAVSAFLQGRIAFLTIEEYIERALERHEFVNEPSLEEIREIDAETRRYVRSLL</sequence>
<organism>
    <name type="scientific">Geobacillus sp. (strain WCH70)</name>
    <dbReference type="NCBI Taxonomy" id="471223"/>
    <lineage>
        <taxon>Bacteria</taxon>
        <taxon>Bacillati</taxon>
        <taxon>Bacillota</taxon>
        <taxon>Bacilli</taxon>
        <taxon>Bacillales</taxon>
        <taxon>Anoxybacillaceae</taxon>
        <taxon>Geobacillus</taxon>
    </lineage>
</organism>
<evidence type="ECO:0000255" key="1">
    <source>
        <dbReference type="HAMAP-Rule" id="MF_00183"/>
    </source>
</evidence>
<name>DXR_GEOSW</name>
<keyword id="KW-0414">Isoprene biosynthesis</keyword>
<keyword id="KW-0464">Manganese</keyword>
<keyword id="KW-0479">Metal-binding</keyword>
<keyword id="KW-0521">NADP</keyword>
<keyword id="KW-0560">Oxidoreductase</keyword>
<reference key="1">
    <citation type="submission" date="2009-06" db="EMBL/GenBank/DDBJ databases">
        <title>Complete sequence of chromosome of Geopacillus sp. WCH70.</title>
        <authorList>
            <consortium name="US DOE Joint Genome Institute"/>
            <person name="Lucas S."/>
            <person name="Copeland A."/>
            <person name="Lapidus A."/>
            <person name="Glavina del Rio T."/>
            <person name="Dalin E."/>
            <person name="Tice H."/>
            <person name="Bruce D."/>
            <person name="Goodwin L."/>
            <person name="Pitluck S."/>
            <person name="Chertkov O."/>
            <person name="Brettin T."/>
            <person name="Detter J.C."/>
            <person name="Han C."/>
            <person name="Larimer F."/>
            <person name="Land M."/>
            <person name="Hauser L."/>
            <person name="Kyrpides N."/>
            <person name="Mikhailova N."/>
            <person name="Brumm P."/>
            <person name="Mead D.A."/>
            <person name="Richardson P."/>
        </authorList>
    </citation>
    <scope>NUCLEOTIDE SEQUENCE [LARGE SCALE GENOMIC DNA]</scope>
    <source>
        <strain>WCH70</strain>
    </source>
</reference>
<gene>
    <name evidence="1" type="primary">dxr</name>
    <name type="ordered locus">GWCH70_1147</name>
</gene>
<protein>
    <recommendedName>
        <fullName evidence="1">1-deoxy-D-xylulose 5-phosphate reductoisomerase</fullName>
        <shortName evidence="1">DXP reductoisomerase</shortName>
        <ecNumber evidence="1">1.1.1.267</ecNumber>
    </recommendedName>
    <alternativeName>
        <fullName evidence="1">1-deoxyxylulose-5-phosphate reductoisomerase</fullName>
    </alternativeName>
    <alternativeName>
        <fullName evidence="1">2-C-methyl-D-erythritol 4-phosphate synthase</fullName>
    </alternativeName>
</protein>
<comment type="function">
    <text evidence="1">Catalyzes the NADPH-dependent rearrangement and reduction of 1-deoxy-D-xylulose-5-phosphate (DXP) to 2-C-methyl-D-erythritol 4-phosphate (MEP).</text>
</comment>
<comment type="catalytic activity">
    <reaction evidence="1">
        <text>2-C-methyl-D-erythritol 4-phosphate + NADP(+) = 1-deoxy-D-xylulose 5-phosphate + NADPH + H(+)</text>
        <dbReference type="Rhea" id="RHEA:13717"/>
        <dbReference type="ChEBI" id="CHEBI:15378"/>
        <dbReference type="ChEBI" id="CHEBI:57783"/>
        <dbReference type="ChEBI" id="CHEBI:57792"/>
        <dbReference type="ChEBI" id="CHEBI:58262"/>
        <dbReference type="ChEBI" id="CHEBI:58349"/>
        <dbReference type="EC" id="1.1.1.267"/>
    </reaction>
    <physiologicalReaction direction="right-to-left" evidence="1">
        <dbReference type="Rhea" id="RHEA:13719"/>
    </physiologicalReaction>
</comment>
<comment type="cofactor">
    <cofactor evidence="1">
        <name>Mg(2+)</name>
        <dbReference type="ChEBI" id="CHEBI:18420"/>
    </cofactor>
    <cofactor evidence="1">
        <name>Mn(2+)</name>
        <dbReference type="ChEBI" id="CHEBI:29035"/>
    </cofactor>
</comment>
<comment type="pathway">
    <text evidence="1">Isoprenoid biosynthesis; isopentenyl diphosphate biosynthesis via DXP pathway; isopentenyl diphosphate from 1-deoxy-D-xylulose 5-phosphate: step 1/6.</text>
</comment>
<comment type="similarity">
    <text evidence="1">Belongs to the DXR family.</text>
</comment>
<feature type="chain" id="PRO_1000203889" description="1-deoxy-D-xylulose 5-phosphate reductoisomerase">
    <location>
        <begin position="1"/>
        <end position="381"/>
    </location>
</feature>
<feature type="binding site" evidence="1">
    <location>
        <position position="10"/>
    </location>
    <ligand>
        <name>NADPH</name>
        <dbReference type="ChEBI" id="CHEBI:57783"/>
    </ligand>
</feature>
<feature type="binding site" evidence="1">
    <location>
        <position position="11"/>
    </location>
    <ligand>
        <name>NADPH</name>
        <dbReference type="ChEBI" id="CHEBI:57783"/>
    </ligand>
</feature>
<feature type="binding site" evidence="1">
    <location>
        <position position="12"/>
    </location>
    <ligand>
        <name>NADPH</name>
        <dbReference type="ChEBI" id="CHEBI:57783"/>
    </ligand>
</feature>
<feature type="binding site" evidence="1">
    <location>
        <position position="13"/>
    </location>
    <ligand>
        <name>NADPH</name>
        <dbReference type="ChEBI" id="CHEBI:57783"/>
    </ligand>
</feature>
<feature type="binding site" evidence="1">
    <location>
        <position position="36"/>
    </location>
    <ligand>
        <name>NADPH</name>
        <dbReference type="ChEBI" id="CHEBI:57783"/>
    </ligand>
</feature>
<feature type="binding site" evidence="1">
    <location>
        <position position="37"/>
    </location>
    <ligand>
        <name>NADPH</name>
        <dbReference type="ChEBI" id="CHEBI:57783"/>
    </ligand>
</feature>
<feature type="binding site" evidence="1">
    <location>
        <position position="38"/>
    </location>
    <ligand>
        <name>NADPH</name>
        <dbReference type="ChEBI" id="CHEBI:57783"/>
    </ligand>
</feature>
<feature type="binding site" evidence="1">
    <location>
        <position position="121"/>
    </location>
    <ligand>
        <name>NADPH</name>
        <dbReference type="ChEBI" id="CHEBI:57783"/>
    </ligand>
</feature>
<feature type="binding site" evidence="1">
    <location>
        <position position="122"/>
    </location>
    <ligand>
        <name>1-deoxy-D-xylulose 5-phosphate</name>
        <dbReference type="ChEBI" id="CHEBI:57792"/>
    </ligand>
</feature>
<feature type="binding site" evidence="1">
    <location>
        <position position="123"/>
    </location>
    <ligand>
        <name>NADPH</name>
        <dbReference type="ChEBI" id="CHEBI:57783"/>
    </ligand>
</feature>
<feature type="binding site" evidence="1">
    <location>
        <position position="147"/>
    </location>
    <ligand>
        <name>Mn(2+)</name>
        <dbReference type="ChEBI" id="CHEBI:29035"/>
    </ligand>
</feature>
<feature type="binding site" evidence="1">
    <location>
        <position position="148"/>
    </location>
    <ligand>
        <name>1-deoxy-D-xylulose 5-phosphate</name>
        <dbReference type="ChEBI" id="CHEBI:57792"/>
    </ligand>
</feature>
<feature type="binding site" evidence="1">
    <location>
        <position position="149"/>
    </location>
    <ligand>
        <name>1-deoxy-D-xylulose 5-phosphate</name>
        <dbReference type="ChEBI" id="CHEBI:57792"/>
    </ligand>
</feature>
<feature type="binding site" evidence="1">
    <location>
        <position position="149"/>
    </location>
    <ligand>
        <name>Mn(2+)</name>
        <dbReference type="ChEBI" id="CHEBI:29035"/>
    </ligand>
</feature>
<feature type="binding site" evidence="1">
    <location>
        <position position="173"/>
    </location>
    <ligand>
        <name>1-deoxy-D-xylulose 5-phosphate</name>
        <dbReference type="ChEBI" id="CHEBI:57792"/>
    </ligand>
</feature>
<feature type="binding site" evidence="1">
    <location>
        <position position="196"/>
    </location>
    <ligand>
        <name>1-deoxy-D-xylulose 5-phosphate</name>
        <dbReference type="ChEBI" id="CHEBI:57792"/>
    </ligand>
</feature>
<feature type="binding site" evidence="1">
    <location>
        <position position="202"/>
    </location>
    <ligand>
        <name>NADPH</name>
        <dbReference type="ChEBI" id="CHEBI:57783"/>
    </ligand>
</feature>
<feature type="binding site" evidence="1">
    <location>
        <position position="209"/>
    </location>
    <ligand>
        <name>1-deoxy-D-xylulose 5-phosphate</name>
        <dbReference type="ChEBI" id="CHEBI:57792"/>
    </ligand>
</feature>
<feature type="binding site" evidence="1">
    <location>
        <position position="214"/>
    </location>
    <ligand>
        <name>1-deoxy-D-xylulose 5-phosphate</name>
        <dbReference type="ChEBI" id="CHEBI:57792"/>
    </ligand>
</feature>
<feature type="binding site" evidence="1">
    <location>
        <position position="215"/>
    </location>
    <ligand>
        <name>1-deoxy-D-xylulose 5-phosphate</name>
        <dbReference type="ChEBI" id="CHEBI:57792"/>
    </ligand>
</feature>
<feature type="binding site" evidence="1">
    <location>
        <position position="218"/>
    </location>
    <ligand>
        <name>1-deoxy-D-xylulose 5-phosphate</name>
        <dbReference type="ChEBI" id="CHEBI:57792"/>
    </ligand>
</feature>
<feature type="binding site" evidence="1">
    <location>
        <position position="218"/>
    </location>
    <ligand>
        <name>Mn(2+)</name>
        <dbReference type="ChEBI" id="CHEBI:29035"/>
    </ligand>
</feature>
<dbReference type="EC" id="1.1.1.267" evidence="1"/>
<dbReference type="EMBL" id="CP001638">
    <property type="protein sequence ID" value="ACS24007.1"/>
    <property type="molecule type" value="Genomic_DNA"/>
</dbReference>
<dbReference type="SMR" id="C5D9C1"/>
<dbReference type="STRING" id="471223.GWCH70_1147"/>
<dbReference type="KEGG" id="gwc:GWCH70_1147"/>
<dbReference type="eggNOG" id="COG0743">
    <property type="taxonomic scope" value="Bacteria"/>
</dbReference>
<dbReference type="HOGENOM" id="CLU_035714_4_0_9"/>
<dbReference type="OrthoDB" id="9806546at2"/>
<dbReference type="UniPathway" id="UPA00056">
    <property type="reaction ID" value="UER00092"/>
</dbReference>
<dbReference type="GO" id="GO:0030604">
    <property type="term" value="F:1-deoxy-D-xylulose-5-phosphate reductoisomerase activity"/>
    <property type="evidence" value="ECO:0007669"/>
    <property type="project" value="UniProtKB-UniRule"/>
</dbReference>
<dbReference type="GO" id="GO:0030145">
    <property type="term" value="F:manganese ion binding"/>
    <property type="evidence" value="ECO:0007669"/>
    <property type="project" value="TreeGrafter"/>
</dbReference>
<dbReference type="GO" id="GO:0070402">
    <property type="term" value="F:NADPH binding"/>
    <property type="evidence" value="ECO:0007669"/>
    <property type="project" value="InterPro"/>
</dbReference>
<dbReference type="GO" id="GO:0051484">
    <property type="term" value="P:isopentenyl diphosphate biosynthetic process, methylerythritol 4-phosphate pathway involved in terpenoid biosynthetic process"/>
    <property type="evidence" value="ECO:0007669"/>
    <property type="project" value="TreeGrafter"/>
</dbReference>
<dbReference type="FunFam" id="3.40.50.720:FF:000045">
    <property type="entry name" value="1-deoxy-D-xylulose 5-phosphate reductoisomerase"/>
    <property type="match status" value="1"/>
</dbReference>
<dbReference type="Gene3D" id="1.10.1740.10">
    <property type="match status" value="1"/>
</dbReference>
<dbReference type="Gene3D" id="3.40.50.720">
    <property type="entry name" value="NAD(P)-binding Rossmann-like Domain"/>
    <property type="match status" value="1"/>
</dbReference>
<dbReference type="HAMAP" id="MF_00183">
    <property type="entry name" value="DXP_reductoisom"/>
    <property type="match status" value="1"/>
</dbReference>
<dbReference type="InterPro" id="IPR003821">
    <property type="entry name" value="DXP_reductoisomerase"/>
</dbReference>
<dbReference type="InterPro" id="IPR013644">
    <property type="entry name" value="DXP_reductoisomerase_C"/>
</dbReference>
<dbReference type="InterPro" id="IPR013512">
    <property type="entry name" value="DXP_reductoisomerase_N"/>
</dbReference>
<dbReference type="InterPro" id="IPR026877">
    <property type="entry name" value="DXPR_C"/>
</dbReference>
<dbReference type="InterPro" id="IPR036169">
    <property type="entry name" value="DXPR_C_sf"/>
</dbReference>
<dbReference type="InterPro" id="IPR036291">
    <property type="entry name" value="NAD(P)-bd_dom_sf"/>
</dbReference>
<dbReference type="NCBIfam" id="TIGR00243">
    <property type="entry name" value="Dxr"/>
    <property type="match status" value="1"/>
</dbReference>
<dbReference type="NCBIfam" id="NF009114">
    <property type="entry name" value="PRK12464.1"/>
    <property type="match status" value="1"/>
</dbReference>
<dbReference type="PANTHER" id="PTHR30525">
    <property type="entry name" value="1-DEOXY-D-XYLULOSE 5-PHOSPHATE REDUCTOISOMERASE"/>
    <property type="match status" value="1"/>
</dbReference>
<dbReference type="PANTHER" id="PTHR30525:SF0">
    <property type="entry name" value="1-DEOXY-D-XYLULOSE 5-PHOSPHATE REDUCTOISOMERASE, CHLOROPLASTIC"/>
    <property type="match status" value="1"/>
</dbReference>
<dbReference type="Pfam" id="PF08436">
    <property type="entry name" value="DXP_redisom_C"/>
    <property type="match status" value="1"/>
</dbReference>
<dbReference type="Pfam" id="PF02670">
    <property type="entry name" value="DXP_reductoisom"/>
    <property type="match status" value="1"/>
</dbReference>
<dbReference type="Pfam" id="PF13288">
    <property type="entry name" value="DXPR_C"/>
    <property type="match status" value="1"/>
</dbReference>
<dbReference type="PIRSF" id="PIRSF006205">
    <property type="entry name" value="Dxp_reductismrs"/>
    <property type="match status" value="1"/>
</dbReference>
<dbReference type="SUPFAM" id="SSF69055">
    <property type="entry name" value="1-deoxy-D-xylulose-5-phosphate reductoisomerase, C-terminal domain"/>
    <property type="match status" value="1"/>
</dbReference>
<dbReference type="SUPFAM" id="SSF55347">
    <property type="entry name" value="Glyceraldehyde-3-phosphate dehydrogenase-like, C-terminal domain"/>
    <property type="match status" value="1"/>
</dbReference>
<dbReference type="SUPFAM" id="SSF51735">
    <property type="entry name" value="NAD(P)-binding Rossmann-fold domains"/>
    <property type="match status" value="1"/>
</dbReference>
<proteinExistence type="inferred from homology"/>
<accession>C5D9C1</accession>